<reference key="1">
    <citation type="journal article" date="2004" name="Genes Immun.">
        <title>Evolution of the mannose-binding lectin gene in primates.</title>
        <authorList>
            <person name="Verga Falzacappa M.V."/>
            <person name="Segat L."/>
            <person name="Puppini B."/>
            <person name="Amoroso A."/>
            <person name="Crovella S."/>
        </authorList>
    </citation>
    <scope>NUCLEOTIDE SEQUENCE [GENOMIC DNA]</scope>
</reference>
<keyword id="KW-0106">Calcium</keyword>
<keyword id="KW-0175">Coiled coil</keyword>
<keyword id="KW-0176">Collagen</keyword>
<keyword id="KW-1018">Complement activation lectin pathway</keyword>
<keyword id="KW-0180">Complement pathway</keyword>
<keyword id="KW-1015">Disulfide bond</keyword>
<keyword id="KW-0379">Hydroxylation</keyword>
<keyword id="KW-0391">Immunity</keyword>
<keyword id="KW-0399">Innate immunity</keyword>
<keyword id="KW-0430">Lectin</keyword>
<keyword id="KW-0465">Mannose-binding</keyword>
<keyword id="KW-1185">Reference proteome</keyword>
<keyword id="KW-0677">Repeat</keyword>
<keyword id="KW-0964">Secreted</keyword>
<keyword id="KW-0732">Signal</keyword>
<gene>
    <name type="primary">MBL2</name>
</gene>
<accession>Q66S61</accession>
<protein>
    <recommendedName>
        <fullName>Mannose-binding protein C</fullName>
        <shortName>MBP-C</shortName>
    </recommendedName>
    <alternativeName>
        <fullName>MBP1</fullName>
    </alternativeName>
    <alternativeName>
        <fullName>Mannan-binding protein</fullName>
    </alternativeName>
    <alternativeName>
        <fullName>Mannose-binding lectin</fullName>
    </alternativeName>
</protein>
<sequence>MSLFPSLPLLLLSMVAASYSETVTCEDAQKTCPAVIACSSPGINGFPGKDGRDGTKGEKGEPGQGLRGLQGPPGKLGPPGNPGPSGSPGAKGQKGDPGASPDCDSSLANPERKTLQTEINRIKKWVTFSLGKQVGKKLFLTNGETMTFDKVKALCAQFQASVATPMNQAENRALQSLVKEEAFLGITDEETEGQFVDLTGRRLTYTNWNKGEPNNADSREDCVVLLRSGGWNDVPCSSSHLVICEFPV</sequence>
<dbReference type="EMBL" id="AY707495">
    <property type="protein sequence ID" value="AAU11293.1"/>
    <property type="molecule type" value="Genomic_DNA"/>
</dbReference>
<dbReference type="EMBL" id="AY707492">
    <property type="protein sequence ID" value="AAU11293.1"/>
    <property type="status" value="JOINED"/>
    <property type="molecule type" value="Genomic_DNA"/>
</dbReference>
<dbReference type="EMBL" id="AY707493">
    <property type="protein sequence ID" value="AAU11293.1"/>
    <property type="status" value="JOINED"/>
    <property type="molecule type" value="Genomic_DNA"/>
</dbReference>
<dbReference type="EMBL" id="AY707494">
    <property type="protein sequence ID" value="AAU11293.1"/>
    <property type="status" value="JOINED"/>
    <property type="molecule type" value="Genomic_DNA"/>
</dbReference>
<dbReference type="SMR" id="Q66S61"/>
<dbReference type="FunCoup" id="Q66S61">
    <property type="interactions" value="310"/>
</dbReference>
<dbReference type="STRING" id="9483.ENSCJAP00000009131"/>
<dbReference type="eggNOG" id="KOG4297">
    <property type="taxonomic scope" value="Eukaryota"/>
</dbReference>
<dbReference type="InParanoid" id="Q66S61"/>
<dbReference type="Proteomes" id="UP000008225">
    <property type="component" value="Unplaced"/>
</dbReference>
<dbReference type="GO" id="GO:0005581">
    <property type="term" value="C:collagen trimer"/>
    <property type="evidence" value="ECO:0007669"/>
    <property type="project" value="UniProtKB-KW"/>
</dbReference>
<dbReference type="GO" id="GO:0005615">
    <property type="term" value="C:extracellular space"/>
    <property type="evidence" value="ECO:0007669"/>
    <property type="project" value="TreeGrafter"/>
</dbReference>
<dbReference type="GO" id="GO:0005771">
    <property type="term" value="C:multivesicular body"/>
    <property type="evidence" value="ECO:0007669"/>
    <property type="project" value="TreeGrafter"/>
</dbReference>
<dbReference type="GO" id="GO:0005537">
    <property type="term" value="F:D-mannose binding"/>
    <property type="evidence" value="ECO:0007669"/>
    <property type="project" value="UniProtKB-KW"/>
</dbReference>
<dbReference type="GO" id="GO:0006958">
    <property type="term" value="P:complement activation, classical pathway"/>
    <property type="evidence" value="ECO:0007669"/>
    <property type="project" value="UniProtKB-KW"/>
</dbReference>
<dbReference type="GO" id="GO:0001867">
    <property type="term" value="P:complement activation, lectin pathway"/>
    <property type="evidence" value="ECO:0007669"/>
    <property type="project" value="UniProtKB-KW"/>
</dbReference>
<dbReference type="CDD" id="cd03591">
    <property type="entry name" value="CLECT_collectin_like"/>
    <property type="match status" value="1"/>
</dbReference>
<dbReference type="FunFam" id="3.10.100.10:FF:000088">
    <property type="entry name" value="Mannose-binding protein A"/>
    <property type="match status" value="1"/>
</dbReference>
<dbReference type="Gene3D" id="3.10.100.10">
    <property type="entry name" value="Mannose-Binding Protein A, subunit A"/>
    <property type="match status" value="1"/>
</dbReference>
<dbReference type="InterPro" id="IPR001304">
    <property type="entry name" value="C-type_lectin-like"/>
</dbReference>
<dbReference type="InterPro" id="IPR016186">
    <property type="entry name" value="C-type_lectin-like/link_sf"/>
</dbReference>
<dbReference type="InterPro" id="IPR018378">
    <property type="entry name" value="C-type_lectin_CS"/>
</dbReference>
<dbReference type="InterPro" id="IPR051077">
    <property type="entry name" value="Ca-dependent_lectin"/>
</dbReference>
<dbReference type="InterPro" id="IPR008160">
    <property type="entry name" value="Collagen"/>
</dbReference>
<dbReference type="InterPro" id="IPR033990">
    <property type="entry name" value="Collectin_CTLD"/>
</dbReference>
<dbReference type="InterPro" id="IPR016187">
    <property type="entry name" value="CTDL_fold"/>
</dbReference>
<dbReference type="PANTHER" id="PTHR24024:SF34">
    <property type="entry name" value="MANNOSE-BINDING PROTEIN C"/>
    <property type="match status" value="1"/>
</dbReference>
<dbReference type="PANTHER" id="PTHR24024">
    <property type="entry name" value="PULMONARY SURFACTANT-ASSOCIATED PROTEIN A"/>
    <property type="match status" value="1"/>
</dbReference>
<dbReference type="Pfam" id="PF01391">
    <property type="entry name" value="Collagen"/>
    <property type="match status" value="1"/>
</dbReference>
<dbReference type="Pfam" id="PF00059">
    <property type="entry name" value="Lectin_C"/>
    <property type="match status" value="1"/>
</dbReference>
<dbReference type="SMART" id="SM00034">
    <property type="entry name" value="CLECT"/>
    <property type="match status" value="1"/>
</dbReference>
<dbReference type="SUPFAM" id="SSF56436">
    <property type="entry name" value="C-type lectin-like"/>
    <property type="match status" value="1"/>
</dbReference>
<dbReference type="SUPFAM" id="SSF57944">
    <property type="entry name" value="Triple coiled coil domain of C-type lectins"/>
    <property type="match status" value="1"/>
</dbReference>
<dbReference type="PROSITE" id="PS00615">
    <property type="entry name" value="C_TYPE_LECTIN_1"/>
    <property type="match status" value="1"/>
</dbReference>
<dbReference type="PROSITE" id="PS50041">
    <property type="entry name" value="C_TYPE_LECTIN_2"/>
    <property type="match status" value="1"/>
</dbReference>
<organism>
    <name type="scientific">Callithrix jacchus</name>
    <name type="common">White-tufted-ear marmoset</name>
    <dbReference type="NCBI Taxonomy" id="9483"/>
    <lineage>
        <taxon>Eukaryota</taxon>
        <taxon>Metazoa</taxon>
        <taxon>Chordata</taxon>
        <taxon>Craniata</taxon>
        <taxon>Vertebrata</taxon>
        <taxon>Euteleostomi</taxon>
        <taxon>Mammalia</taxon>
        <taxon>Eutheria</taxon>
        <taxon>Euarchontoglires</taxon>
        <taxon>Primates</taxon>
        <taxon>Haplorrhini</taxon>
        <taxon>Platyrrhini</taxon>
        <taxon>Cebidae</taxon>
        <taxon>Callitrichinae</taxon>
        <taxon>Callithrix</taxon>
        <taxon>Callithrix</taxon>
    </lineage>
</organism>
<comment type="function">
    <text evidence="1">Calcium-dependent lectin involved in innate immune defense. Binds mannose, fucose and N-acetylglucosamine on different microorganisms and activates the lectin complement pathway. Binds to late apoptotic cells, as well as to apoptotic blebs and to necrotic cells, but not to early apoptotic cells, facilitating their uptake by macrophages (By similarity).</text>
</comment>
<comment type="subunit">
    <text evidence="1">Oligomeric complex of 3 or more homotrimers. Interacts with MASP1 and MASP2 (By similarity). Interacts with MEP1A and MEP1B and may inhibit their catalytic activity (By similarity).</text>
</comment>
<comment type="subcellular location">
    <subcellularLocation>
        <location evidence="1">Secreted</location>
    </subcellularLocation>
</comment>
<comment type="domain">
    <text evidence="1">The coiled-coil domain mediates trimerization.</text>
</comment>
<comment type="PTM">
    <text evidence="1">Hydroxylation on proline residues within the sequence motif, GXPG, is most likely to be 4-hydroxy as this fits the requirement for 4-hydroxylation in vertebrates.</text>
</comment>
<feature type="signal peptide" evidence="1">
    <location>
        <begin position="1"/>
        <end position="20"/>
    </location>
</feature>
<feature type="chain" id="PRO_0000017398" description="Mannose-binding protein C">
    <location>
        <begin position="21"/>
        <end position="248"/>
    </location>
</feature>
<feature type="domain" description="Collagen-like">
    <location>
        <begin position="42"/>
        <end position="99"/>
    </location>
</feature>
<feature type="domain" description="C-type lectin" evidence="2">
    <location>
        <begin position="134"/>
        <end position="245"/>
    </location>
</feature>
<feature type="region of interest" description="Disordered" evidence="3">
    <location>
        <begin position="43"/>
        <end position="112"/>
    </location>
</feature>
<feature type="coiled-coil region" evidence="1">
    <location>
        <begin position="112"/>
        <end position="130"/>
    </location>
</feature>
<feature type="compositionally biased region" description="Basic and acidic residues" evidence="3">
    <location>
        <begin position="49"/>
        <end position="61"/>
    </location>
</feature>
<feature type="modified residue" description="4-hydroxyproline" evidence="1">
    <location>
        <position position="47"/>
    </location>
</feature>
<feature type="modified residue" description="4-hydroxyproline" evidence="1">
    <location>
        <position position="73"/>
    </location>
</feature>
<feature type="modified residue" description="4-hydroxyproline" evidence="1">
    <location>
        <position position="79"/>
    </location>
</feature>
<feature type="modified residue" description="4-hydroxyproline" evidence="1">
    <location>
        <position position="82"/>
    </location>
</feature>
<feature type="modified residue" description="4-hydroxyproline" evidence="1">
    <location>
        <position position="88"/>
    </location>
</feature>
<feature type="disulfide bond" evidence="2">
    <location>
        <begin position="155"/>
        <end position="244"/>
    </location>
</feature>
<feature type="disulfide bond" evidence="2">
    <location>
        <begin position="222"/>
        <end position="236"/>
    </location>
</feature>
<name>MBL2_CALJA</name>
<evidence type="ECO:0000250" key="1"/>
<evidence type="ECO:0000255" key="2">
    <source>
        <dbReference type="PROSITE-ProRule" id="PRU00040"/>
    </source>
</evidence>
<evidence type="ECO:0000256" key="3">
    <source>
        <dbReference type="SAM" id="MobiDB-lite"/>
    </source>
</evidence>
<proteinExistence type="inferred from homology"/>